<dbReference type="EMBL" id="AE008922">
    <property type="protein sequence ID" value="AAM40200.1"/>
    <property type="molecule type" value="Genomic_DNA"/>
</dbReference>
<dbReference type="EMBL" id="AF426389">
    <property type="protein sequence ID" value="AAL74152.1"/>
    <property type="molecule type" value="Genomic_DNA"/>
</dbReference>
<dbReference type="RefSeq" id="NP_636276.1">
    <property type="nucleotide sequence ID" value="NC_003902.1"/>
</dbReference>
<dbReference type="RefSeq" id="WP_003469157.1">
    <property type="nucleotide sequence ID" value="NC_003902.1"/>
</dbReference>
<dbReference type="SMR" id="Q8PC54"/>
<dbReference type="STRING" id="190485.XCC0890"/>
<dbReference type="EnsemblBacteria" id="AAM40200">
    <property type="protein sequence ID" value="AAM40200"/>
    <property type="gene ID" value="XCC0890"/>
</dbReference>
<dbReference type="GeneID" id="93986250"/>
<dbReference type="KEGG" id="xcc:XCC0890"/>
<dbReference type="PATRIC" id="fig|190485.4.peg.961"/>
<dbReference type="eggNOG" id="COG0048">
    <property type="taxonomic scope" value="Bacteria"/>
</dbReference>
<dbReference type="HOGENOM" id="CLU_104295_1_2_6"/>
<dbReference type="OrthoDB" id="9802366at2"/>
<dbReference type="Proteomes" id="UP000001010">
    <property type="component" value="Chromosome"/>
</dbReference>
<dbReference type="GO" id="GO:0005840">
    <property type="term" value="C:ribosome"/>
    <property type="evidence" value="ECO:0000318"/>
    <property type="project" value="GO_Central"/>
</dbReference>
<dbReference type="GO" id="GO:0015935">
    <property type="term" value="C:small ribosomal subunit"/>
    <property type="evidence" value="ECO:0007669"/>
    <property type="project" value="InterPro"/>
</dbReference>
<dbReference type="GO" id="GO:0019843">
    <property type="term" value="F:rRNA binding"/>
    <property type="evidence" value="ECO:0007669"/>
    <property type="project" value="UniProtKB-UniRule"/>
</dbReference>
<dbReference type="GO" id="GO:0003735">
    <property type="term" value="F:structural constituent of ribosome"/>
    <property type="evidence" value="ECO:0000318"/>
    <property type="project" value="GO_Central"/>
</dbReference>
<dbReference type="GO" id="GO:0000049">
    <property type="term" value="F:tRNA binding"/>
    <property type="evidence" value="ECO:0007669"/>
    <property type="project" value="UniProtKB-UniRule"/>
</dbReference>
<dbReference type="GO" id="GO:0006412">
    <property type="term" value="P:translation"/>
    <property type="evidence" value="ECO:0000318"/>
    <property type="project" value="GO_Central"/>
</dbReference>
<dbReference type="CDD" id="cd03368">
    <property type="entry name" value="Ribosomal_S12"/>
    <property type="match status" value="1"/>
</dbReference>
<dbReference type="FunFam" id="2.40.50.140:FF:000001">
    <property type="entry name" value="30S ribosomal protein S12"/>
    <property type="match status" value="1"/>
</dbReference>
<dbReference type="Gene3D" id="2.40.50.140">
    <property type="entry name" value="Nucleic acid-binding proteins"/>
    <property type="match status" value="1"/>
</dbReference>
<dbReference type="HAMAP" id="MF_00403_B">
    <property type="entry name" value="Ribosomal_uS12_B"/>
    <property type="match status" value="1"/>
</dbReference>
<dbReference type="InterPro" id="IPR012340">
    <property type="entry name" value="NA-bd_OB-fold"/>
</dbReference>
<dbReference type="InterPro" id="IPR006032">
    <property type="entry name" value="Ribosomal_uS12"/>
</dbReference>
<dbReference type="InterPro" id="IPR005679">
    <property type="entry name" value="Ribosomal_uS12_bac"/>
</dbReference>
<dbReference type="NCBIfam" id="TIGR00981">
    <property type="entry name" value="rpsL_bact"/>
    <property type="match status" value="1"/>
</dbReference>
<dbReference type="PANTHER" id="PTHR11652">
    <property type="entry name" value="30S RIBOSOMAL PROTEIN S12 FAMILY MEMBER"/>
    <property type="match status" value="1"/>
</dbReference>
<dbReference type="Pfam" id="PF00164">
    <property type="entry name" value="Ribosom_S12_S23"/>
    <property type="match status" value="1"/>
</dbReference>
<dbReference type="PIRSF" id="PIRSF002133">
    <property type="entry name" value="Ribosomal_S12/S23"/>
    <property type="match status" value="1"/>
</dbReference>
<dbReference type="PRINTS" id="PR01034">
    <property type="entry name" value="RIBOSOMALS12"/>
</dbReference>
<dbReference type="SUPFAM" id="SSF50249">
    <property type="entry name" value="Nucleic acid-binding proteins"/>
    <property type="match status" value="1"/>
</dbReference>
<dbReference type="PROSITE" id="PS00055">
    <property type="entry name" value="RIBOSOMAL_S12"/>
    <property type="match status" value="1"/>
</dbReference>
<keyword id="KW-0488">Methylation</keyword>
<keyword id="KW-1185">Reference proteome</keyword>
<keyword id="KW-0687">Ribonucleoprotein</keyword>
<keyword id="KW-0689">Ribosomal protein</keyword>
<keyword id="KW-0694">RNA-binding</keyword>
<keyword id="KW-0699">rRNA-binding</keyword>
<keyword id="KW-0820">tRNA-binding</keyword>
<organism>
    <name type="scientific">Xanthomonas campestris pv. campestris (strain ATCC 33913 / DSM 3586 / NCPPB 528 / LMG 568 / P 25)</name>
    <dbReference type="NCBI Taxonomy" id="190485"/>
    <lineage>
        <taxon>Bacteria</taxon>
        <taxon>Pseudomonadati</taxon>
        <taxon>Pseudomonadota</taxon>
        <taxon>Gammaproteobacteria</taxon>
        <taxon>Lysobacterales</taxon>
        <taxon>Lysobacteraceae</taxon>
        <taxon>Xanthomonas</taxon>
    </lineage>
</organism>
<sequence>MATINQLVRKPRQATTYKSASPALDKCPQRRGVCTRVYTTTPKKPNSALRKVAKVRLTNQEEVISYIGGEGHNLQEHSVVLIRGGRVKDLPGVRYHTVRGSLDAAGVAKRRQGRSKYGAKRPKS</sequence>
<protein>
    <recommendedName>
        <fullName evidence="3">Small ribosomal subunit protein uS12</fullName>
    </recommendedName>
    <alternativeName>
        <fullName>30S ribosomal protein S12</fullName>
    </alternativeName>
</protein>
<feature type="chain" id="PRO_0000146358" description="Small ribosomal subunit protein uS12">
    <location>
        <begin position="1"/>
        <end position="124"/>
    </location>
</feature>
<feature type="region of interest" description="Disordered" evidence="2">
    <location>
        <begin position="1"/>
        <end position="25"/>
    </location>
</feature>
<feature type="modified residue" description="3-methylthioaspartic acid" evidence="1">
    <location>
        <position position="89"/>
    </location>
</feature>
<feature type="sequence conflict" description="In Ref. 2; AAL74152." evidence="3" ref="2">
    <original>AS</original>
    <variation>PP</variation>
    <location>
        <begin position="20"/>
        <end position="21"/>
    </location>
</feature>
<feature type="sequence conflict" description="In Ref. 2; AAL74152." evidence="3" ref="2">
    <original>R</original>
    <variation>A</variation>
    <location>
        <position position="30"/>
    </location>
</feature>
<feature type="sequence conflict" description="In Ref. 2." evidence="3" ref="2">
    <location>
        <begin position="52"/>
        <end position="54"/>
    </location>
</feature>
<feature type="sequence conflict" description="In Ref. 2; AAL74152." evidence="3" ref="2">
    <original>EH</original>
    <variation>DD</variation>
    <location>
        <begin position="76"/>
        <end position="77"/>
    </location>
</feature>
<feature type="sequence conflict" description="In Ref. 2; AAL74152." evidence="3" ref="2">
    <original>L</original>
    <variation>P</variation>
    <location>
        <position position="90"/>
    </location>
</feature>
<accession>Q8PC54</accession>
<accession>Q8RTJ9</accession>
<comment type="function">
    <text evidence="1">With S4 and S5 plays an important role in translational accuracy.</text>
</comment>
<comment type="function">
    <text evidence="1">Interacts with and stabilizes bases of the 16S rRNA that are involved in tRNA selection in the A site and with the mRNA backbone. Located at the interface of the 30S and 50S subunits, it traverses the body of the 30S subunit contacting proteins on the other side and probably holding the rRNA structure together. The combined cluster of proteins S8, S12 and S17 appears to hold together the shoulder and platform of the 30S subunit (By similarity).</text>
</comment>
<comment type="subunit">
    <text evidence="1">Part of the 30S ribosomal subunit. Contacts proteins S8 and S17. May interact with IF1 in the 30S initiation complex (By similarity).</text>
</comment>
<comment type="similarity">
    <text evidence="3">Belongs to the universal ribosomal protein uS12 family.</text>
</comment>
<proteinExistence type="inferred from homology"/>
<name>RS12_XANCP</name>
<gene>
    <name type="primary">rpsL</name>
    <name type="ordered locus">XCC0890</name>
</gene>
<evidence type="ECO:0000250" key="1"/>
<evidence type="ECO:0000256" key="2">
    <source>
        <dbReference type="SAM" id="MobiDB-lite"/>
    </source>
</evidence>
<evidence type="ECO:0000305" key="3"/>
<reference key="1">
    <citation type="journal article" date="2002" name="Nature">
        <title>Comparison of the genomes of two Xanthomonas pathogens with differing host specificities.</title>
        <authorList>
            <person name="da Silva A.C.R."/>
            <person name="Ferro J.A."/>
            <person name="Reinach F.C."/>
            <person name="Farah C.S."/>
            <person name="Furlan L.R."/>
            <person name="Quaggio R.B."/>
            <person name="Monteiro-Vitorello C.B."/>
            <person name="Van Sluys M.A."/>
            <person name="Almeida N.F. Jr."/>
            <person name="Alves L.M.C."/>
            <person name="do Amaral A.M."/>
            <person name="Bertolini M.C."/>
            <person name="Camargo L.E.A."/>
            <person name="Camarotte G."/>
            <person name="Cannavan F."/>
            <person name="Cardozo J."/>
            <person name="Chambergo F."/>
            <person name="Ciapina L.P."/>
            <person name="Cicarelli R.M.B."/>
            <person name="Coutinho L.L."/>
            <person name="Cursino-Santos J.R."/>
            <person name="El-Dorry H."/>
            <person name="Faria J.B."/>
            <person name="Ferreira A.J.S."/>
            <person name="Ferreira R.C.C."/>
            <person name="Ferro M.I.T."/>
            <person name="Formighieri E.F."/>
            <person name="Franco M.C."/>
            <person name="Greggio C.C."/>
            <person name="Gruber A."/>
            <person name="Katsuyama A.M."/>
            <person name="Kishi L.T."/>
            <person name="Leite R.P."/>
            <person name="Lemos E.G.M."/>
            <person name="Lemos M.V.F."/>
            <person name="Locali E.C."/>
            <person name="Machado M.A."/>
            <person name="Madeira A.M.B.N."/>
            <person name="Martinez-Rossi N.M."/>
            <person name="Martins E.C."/>
            <person name="Meidanis J."/>
            <person name="Menck C.F.M."/>
            <person name="Miyaki C.Y."/>
            <person name="Moon D.H."/>
            <person name="Moreira L.M."/>
            <person name="Novo M.T.M."/>
            <person name="Okura V.K."/>
            <person name="Oliveira M.C."/>
            <person name="Oliveira V.R."/>
            <person name="Pereira H.A."/>
            <person name="Rossi A."/>
            <person name="Sena J.A.D."/>
            <person name="Silva C."/>
            <person name="de Souza R.F."/>
            <person name="Spinola L.A.F."/>
            <person name="Takita M.A."/>
            <person name="Tamura R.E."/>
            <person name="Teixeira E.C."/>
            <person name="Tezza R.I.D."/>
            <person name="Trindade dos Santos M."/>
            <person name="Truffi D."/>
            <person name="Tsai S.M."/>
            <person name="White F.F."/>
            <person name="Setubal J.C."/>
            <person name="Kitajima J.P."/>
        </authorList>
    </citation>
    <scope>NUCLEOTIDE SEQUENCE [LARGE SCALE GENOMIC DNA]</scope>
    <source>
        <strain>ATCC 33913 / DSM 3586 / NCPPB 528 / LMG 568 / P 25</strain>
    </source>
</reference>
<reference key="2">
    <citation type="submission" date="2001-10" db="EMBL/GenBank/DDBJ databases">
        <authorList>
            <person name="Chen S.-J."/>
            <person name="Yang M.-T."/>
        </authorList>
    </citation>
    <scope>NUCLEOTIDE SEQUENCE [GENOMIC DNA] OF 1-90</scope>
</reference>